<reference key="1">
    <citation type="journal article" date="2004" name="Proc. Natl. Acad. Sci. U.S.A.">
        <title>Genome sequence of Picrophilus torridus and its implications for life around pH 0.</title>
        <authorList>
            <person name="Fuetterer O."/>
            <person name="Angelov A."/>
            <person name="Liesegang H."/>
            <person name="Gottschalk G."/>
            <person name="Schleper C."/>
            <person name="Schepers B."/>
            <person name="Dock C."/>
            <person name="Antranikian G."/>
            <person name="Liebl W."/>
        </authorList>
    </citation>
    <scope>NUCLEOTIDE SEQUENCE [LARGE SCALE GENOMIC DNA]</scope>
    <source>
        <strain>ATCC 700027 / DSM 9790 / JCM 10055 / NBRC 100828 / KAW 2/3</strain>
    </source>
</reference>
<accession>Q6L1F5</accession>
<sequence>MDLIIASRMDEASMLMAEKIIDLYDFNRLNENEYQKDGFKLMFIDDLHIYHNMEKLDFDTLIFLSRHSSSAGVKSLTVHSIGNYRKAELGGYDNKTVLSAPYEMSSSLRSIKELYNDDGYNITFEATHHGPYTKNRSYFIEIGTSGEDWHNDKILEIMARSVIEKNVKRFRSGIGIGGGHYAPKISDYFFNNDINIGHIIPKYVSETIKDNQIIESIENTENCSFILIDWKGSPSRLRSLALDAADKCSLELIKI</sequence>
<comment type="function">
    <text evidence="1">D-aminoacyl-tRNA deacylase with broad substrate specificity. By recycling D-aminoacyl-tRNA to D-amino acids and free tRNA molecules, this enzyme counteracts the toxicity associated with the formation of D-aminoacyl-tRNA entities in vivo.</text>
</comment>
<comment type="catalytic activity">
    <reaction evidence="1">
        <text>a D-aminoacyl-tRNA + H2O = a tRNA + a D-alpha-amino acid + H(+)</text>
        <dbReference type="Rhea" id="RHEA:13953"/>
        <dbReference type="Rhea" id="RHEA-COMP:10123"/>
        <dbReference type="Rhea" id="RHEA-COMP:10124"/>
        <dbReference type="ChEBI" id="CHEBI:15377"/>
        <dbReference type="ChEBI" id="CHEBI:15378"/>
        <dbReference type="ChEBI" id="CHEBI:59871"/>
        <dbReference type="ChEBI" id="CHEBI:78442"/>
        <dbReference type="ChEBI" id="CHEBI:79333"/>
        <dbReference type="EC" id="3.1.1.96"/>
    </reaction>
</comment>
<comment type="catalytic activity">
    <reaction evidence="1">
        <text>glycyl-tRNA(Ala) + H2O = tRNA(Ala) + glycine + H(+)</text>
        <dbReference type="Rhea" id="RHEA:53744"/>
        <dbReference type="Rhea" id="RHEA-COMP:9657"/>
        <dbReference type="Rhea" id="RHEA-COMP:13640"/>
        <dbReference type="ChEBI" id="CHEBI:15377"/>
        <dbReference type="ChEBI" id="CHEBI:15378"/>
        <dbReference type="ChEBI" id="CHEBI:57305"/>
        <dbReference type="ChEBI" id="CHEBI:78442"/>
        <dbReference type="ChEBI" id="CHEBI:78522"/>
        <dbReference type="EC" id="3.1.1.96"/>
    </reaction>
</comment>
<comment type="cofactor">
    <cofactor evidence="1">
        <name>Zn(2+)</name>
        <dbReference type="ChEBI" id="CHEBI:29105"/>
    </cofactor>
    <text evidence="1">Binds 2 Zn(2+) ions per subunit.</text>
</comment>
<comment type="subunit">
    <text evidence="1">Monomer.</text>
</comment>
<comment type="similarity">
    <text evidence="1">Belongs to the DtdA deacylase family.</text>
</comment>
<comment type="sequence caution" evidence="2">
    <conflict type="erroneous initiation">
        <sequence resource="EMBL-CDS" id="AAT43197"/>
    </conflict>
    <text>Extended N-terminus.</text>
</comment>
<organism>
    <name type="scientific">Picrophilus torridus (strain ATCC 700027 / DSM 9790 / JCM 10055 / NBRC 100828 / KAW 2/3)</name>
    <dbReference type="NCBI Taxonomy" id="1122961"/>
    <lineage>
        <taxon>Archaea</taxon>
        <taxon>Methanobacteriati</taxon>
        <taxon>Thermoplasmatota</taxon>
        <taxon>Thermoplasmata</taxon>
        <taxon>Thermoplasmatales</taxon>
        <taxon>Picrophilaceae</taxon>
        <taxon>Picrophilus</taxon>
    </lineage>
</organism>
<evidence type="ECO:0000255" key="1">
    <source>
        <dbReference type="HAMAP-Rule" id="MF_00562"/>
    </source>
</evidence>
<evidence type="ECO:0000305" key="2"/>
<gene>
    <name evidence="1" type="primary">dtdA</name>
    <name type="ordered locus">PTO0612</name>
</gene>
<dbReference type="EC" id="3.1.1.96" evidence="1"/>
<dbReference type="EMBL" id="AE017261">
    <property type="protein sequence ID" value="AAT43197.1"/>
    <property type="status" value="ALT_INIT"/>
    <property type="molecule type" value="Genomic_DNA"/>
</dbReference>
<dbReference type="RefSeq" id="WP_011177413.1">
    <property type="nucleotide sequence ID" value="NZ_FWYE01000001.1"/>
</dbReference>
<dbReference type="SMR" id="Q6L1F5"/>
<dbReference type="FunCoup" id="Q6L1F5">
    <property type="interactions" value="3"/>
</dbReference>
<dbReference type="STRING" id="263820.PTO0612"/>
<dbReference type="PaxDb" id="263820-PTO0612"/>
<dbReference type="GeneID" id="2844829"/>
<dbReference type="KEGG" id="pto:PTO0612"/>
<dbReference type="PATRIC" id="fig|263820.9.peg.644"/>
<dbReference type="eggNOG" id="arCOG01616">
    <property type="taxonomic scope" value="Archaea"/>
</dbReference>
<dbReference type="HOGENOM" id="CLU_056464_1_0_2"/>
<dbReference type="InParanoid" id="Q6L1F5"/>
<dbReference type="OrthoDB" id="9863at2157"/>
<dbReference type="Proteomes" id="UP000000438">
    <property type="component" value="Chromosome"/>
</dbReference>
<dbReference type="GO" id="GO:0051499">
    <property type="term" value="F:D-aminoacyl-tRNA deacylase activity"/>
    <property type="evidence" value="ECO:0007669"/>
    <property type="project" value="UniProtKB-UniRule"/>
</dbReference>
<dbReference type="GO" id="GO:0008270">
    <property type="term" value="F:zinc ion binding"/>
    <property type="evidence" value="ECO:0007669"/>
    <property type="project" value="UniProtKB-UniRule"/>
</dbReference>
<dbReference type="GO" id="GO:0019478">
    <property type="term" value="P:D-amino acid catabolic process"/>
    <property type="evidence" value="ECO:0007669"/>
    <property type="project" value="UniProtKB-UniRule"/>
</dbReference>
<dbReference type="Gene3D" id="3.40.50.10700">
    <property type="entry name" value="AF0625-like"/>
    <property type="match status" value="1"/>
</dbReference>
<dbReference type="Gene3D" id="3.40.630.50">
    <property type="entry name" value="AF0625-like"/>
    <property type="match status" value="1"/>
</dbReference>
<dbReference type="HAMAP" id="MF_00562">
    <property type="entry name" value="Deacylase_DtdA"/>
    <property type="match status" value="1"/>
</dbReference>
<dbReference type="InterPro" id="IPR018033">
    <property type="entry name" value="Deacylase_DtdA_archaea"/>
</dbReference>
<dbReference type="InterPro" id="IPR007508">
    <property type="entry name" value="DtdA"/>
</dbReference>
<dbReference type="NCBIfam" id="NF003072">
    <property type="entry name" value="PRK03995.1-4"/>
    <property type="match status" value="1"/>
</dbReference>
<dbReference type="PANTHER" id="PTHR34667">
    <property type="entry name" value="D-AMINOACYL-TRNA DEACYLASE"/>
    <property type="match status" value="1"/>
</dbReference>
<dbReference type="PANTHER" id="PTHR34667:SF1">
    <property type="entry name" value="D-AMINOACYL-TRNA DEACYLASE"/>
    <property type="match status" value="1"/>
</dbReference>
<dbReference type="Pfam" id="PF04414">
    <property type="entry name" value="tRNA_deacylase"/>
    <property type="match status" value="1"/>
</dbReference>
<dbReference type="PIRSF" id="PIRSF016210">
    <property type="entry name" value="UCP016210"/>
    <property type="match status" value="1"/>
</dbReference>
<dbReference type="SUPFAM" id="SSF142535">
    <property type="entry name" value="AF0625-like"/>
    <property type="match status" value="1"/>
</dbReference>
<proteinExistence type="inferred from homology"/>
<feature type="chain" id="PRO_0000345226" description="D-aminoacyl-tRNA deacylase">
    <location>
        <begin position="1"/>
        <end position="255"/>
    </location>
</feature>
<name>DTDA_PICTO</name>
<protein>
    <recommendedName>
        <fullName evidence="1">D-aminoacyl-tRNA deacylase</fullName>
        <ecNumber evidence="1">3.1.1.96</ecNumber>
    </recommendedName>
    <alternativeName>
        <fullName>D-tyrosyl-tRNA(Tyr) deacylase</fullName>
    </alternativeName>
</protein>
<keyword id="KW-0378">Hydrolase</keyword>
<keyword id="KW-0479">Metal-binding</keyword>
<keyword id="KW-0862">Zinc</keyword>